<feature type="chain" id="PRO_0000046280" description="ATPase 7, plasma membrane-type">
    <location>
        <begin position="1"/>
        <end position="961"/>
    </location>
</feature>
<feature type="topological domain" description="Cytoplasmic" evidence="4">
    <location>
        <begin position="1"/>
        <end position="64"/>
    </location>
</feature>
<feature type="transmembrane region" description="Helical; Name=1" evidence="4">
    <location>
        <begin position="65"/>
        <end position="84"/>
    </location>
</feature>
<feature type="topological domain" description="Extracellular" evidence="4">
    <location>
        <begin position="85"/>
        <end position="96"/>
    </location>
</feature>
<feature type="transmembrane region" description="Helical; Name=2" evidence="4">
    <location>
        <begin position="97"/>
        <end position="117"/>
    </location>
</feature>
<feature type="topological domain" description="Cytoplasmic" evidence="4">
    <location>
        <begin position="118"/>
        <end position="246"/>
    </location>
</feature>
<feature type="transmembrane region" description="Helical; Name=3" evidence="4">
    <location>
        <begin position="247"/>
        <end position="267"/>
    </location>
</feature>
<feature type="topological domain" description="Extracellular" evidence="4">
    <location>
        <begin position="268"/>
        <end position="276"/>
    </location>
</feature>
<feature type="transmembrane region" description="Helical; Name=4" evidence="4">
    <location>
        <begin position="277"/>
        <end position="294"/>
    </location>
</feature>
<feature type="topological domain" description="Cytoplasmic" evidence="4">
    <location>
        <begin position="295"/>
        <end position="643"/>
    </location>
</feature>
<feature type="transmembrane region" description="Helical; Name=5" evidence="4">
    <location>
        <begin position="644"/>
        <end position="665"/>
    </location>
</feature>
<feature type="topological domain" description="Extracellular" evidence="4">
    <location>
        <begin position="666"/>
        <end position="670"/>
    </location>
</feature>
<feature type="transmembrane region" description="Helical; Name=6" evidence="4">
    <location>
        <begin position="671"/>
        <end position="693"/>
    </location>
</feature>
<feature type="topological domain" description="Cytoplasmic" evidence="4">
    <location>
        <begin position="694"/>
        <end position="709"/>
    </location>
</feature>
<feature type="transmembrane region" description="Helical; Name=7" evidence="4">
    <location>
        <begin position="710"/>
        <end position="730"/>
    </location>
</feature>
<feature type="topological domain" description="Extracellular" evidence="4">
    <location>
        <begin position="731"/>
        <end position="764"/>
    </location>
</feature>
<feature type="transmembrane region" description="Helical; Name=8" evidence="4">
    <location>
        <begin position="765"/>
        <end position="785"/>
    </location>
</feature>
<feature type="topological domain" description="Cytoplasmic" evidence="4">
    <location>
        <begin position="786"/>
        <end position="797"/>
    </location>
</feature>
<feature type="transmembrane region" description="Helical; Name=9" evidence="4">
    <location>
        <begin position="798"/>
        <end position="818"/>
    </location>
</feature>
<feature type="topological domain" description="Extracellular" evidence="4">
    <location>
        <begin position="819"/>
        <end position="826"/>
    </location>
</feature>
<feature type="transmembrane region" description="Helical; Name=10" evidence="4">
    <location>
        <begin position="827"/>
        <end position="847"/>
    </location>
</feature>
<feature type="topological domain" description="Cytoplasmic" evidence="4">
    <location>
        <begin position="848"/>
        <end position="961"/>
    </location>
</feature>
<feature type="region of interest" description="Interaction with 14-3-3 proteins" evidence="1">
    <location>
        <begin position="959"/>
        <end position="961"/>
    </location>
</feature>
<feature type="active site" description="4-aspartylphosphate intermediate" evidence="1">
    <location>
        <position position="332"/>
    </location>
</feature>
<feature type="binding site" evidence="1">
    <location>
        <position position="588"/>
    </location>
    <ligand>
        <name>Mg(2+)</name>
        <dbReference type="ChEBI" id="CHEBI:18420"/>
    </ligand>
</feature>
<feature type="binding site" evidence="1">
    <location>
        <position position="592"/>
    </location>
    <ligand>
        <name>Mg(2+)</name>
        <dbReference type="ChEBI" id="CHEBI:18420"/>
    </ligand>
</feature>
<feature type="modified residue" description="Phosphothreonine" evidence="3">
    <location>
        <position position="894"/>
    </location>
</feature>
<feature type="modified residue" description="Phosphoserine" evidence="2">
    <location>
        <position position="910"/>
    </location>
</feature>
<feature type="modified residue" description="Phosphoserine" evidence="2">
    <location>
        <position position="942"/>
    </location>
</feature>
<feature type="modified residue" description="Phosphothreonine" evidence="3">
    <location>
        <position position="960"/>
    </location>
</feature>
<keyword id="KW-0067">ATP-binding</keyword>
<keyword id="KW-0375">Hydrogen ion transport</keyword>
<keyword id="KW-0406">Ion transport</keyword>
<keyword id="KW-0460">Magnesium</keyword>
<keyword id="KW-0472">Membrane</keyword>
<keyword id="KW-0479">Metal-binding</keyword>
<keyword id="KW-0547">Nucleotide-binding</keyword>
<keyword id="KW-0597">Phosphoprotein</keyword>
<keyword id="KW-1185">Reference proteome</keyword>
<keyword id="KW-1278">Translocase</keyword>
<keyword id="KW-0812">Transmembrane</keyword>
<keyword id="KW-1133">Transmembrane helix</keyword>
<keyword id="KW-0813">Transport</keyword>
<reference key="1">
    <citation type="journal article" date="2000" name="Nature">
        <title>Sequence and analysis of chromosome 3 of the plant Arabidopsis thaliana.</title>
        <authorList>
            <person name="Salanoubat M."/>
            <person name="Lemcke K."/>
            <person name="Rieger M."/>
            <person name="Ansorge W."/>
            <person name="Unseld M."/>
            <person name="Fartmann B."/>
            <person name="Valle G."/>
            <person name="Bloecker H."/>
            <person name="Perez-Alonso M."/>
            <person name="Obermaier B."/>
            <person name="Delseny M."/>
            <person name="Boutry M."/>
            <person name="Grivell L.A."/>
            <person name="Mache R."/>
            <person name="Puigdomenech P."/>
            <person name="De Simone V."/>
            <person name="Choisne N."/>
            <person name="Artiguenave F."/>
            <person name="Robert C."/>
            <person name="Brottier P."/>
            <person name="Wincker P."/>
            <person name="Cattolico L."/>
            <person name="Weissenbach J."/>
            <person name="Saurin W."/>
            <person name="Quetier F."/>
            <person name="Schaefer M."/>
            <person name="Mueller-Auer S."/>
            <person name="Gabel C."/>
            <person name="Fuchs M."/>
            <person name="Benes V."/>
            <person name="Wurmbach E."/>
            <person name="Drzonek H."/>
            <person name="Erfle H."/>
            <person name="Jordan N."/>
            <person name="Bangert S."/>
            <person name="Wiedelmann R."/>
            <person name="Kranz H."/>
            <person name="Voss H."/>
            <person name="Holland R."/>
            <person name="Brandt P."/>
            <person name="Nyakatura G."/>
            <person name="Vezzi A."/>
            <person name="D'Angelo M."/>
            <person name="Pallavicini A."/>
            <person name="Toppo S."/>
            <person name="Simionati B."/>
            <person name="Conrad A."/>
            <person name="Hornischer K."/>
            <person name="Kauer G."/>
            <person name="Loehnert T.-H."/>
            <person name="Nordsiek G."/>
            <person name="Reichelt J."/>
            <person name="Scharfe M."/>
            <person name="Schoen O."/>
            <person name="Bargues M."/>
            <person name="Terol J."/>
            <person name="Climent J."/>
            <person name="Navarro P."/>
            <person name="Collado C."/>
            <person name="Perez-Perez A."/>
            <person name="Ottenwaelder B."/>
            <person name="Duchemin D."/>
            <person name="Cooke R."/>
            <person name="Laudie M."/>
            <person name="Berger-Llauro C."/>
            <person name="Purnelle B."/>
            <person name="Masuy D."/>
            <person name="de Haan M."/>
            <person name="Maarse A.C."/>
            <person name="Alcaraz J.-P."/>
            <person name="Cottet A."/>
            <person name="Casacuberta E."/>
            <person name="Monfort A."/>
            <person name="Argiriou A."/>
            <person name="Flores M."/>
            <person name="Liguori R."/>
            <person name="Vitale D."/>
            <person name="Mannhaupt G."/>
            <person name="Haase D."/>
            <person name="Schoof H."/>
            <person name="Rudd S."/>
            <person name="Zaccaria P."/>
            <person name="Mewes H.-W."/>
            <person name="Mayer K.F.X."/>
            <person name="Kaul S."/>
            <person name="Town C.D."/>
            <person name="Koo H.L."/>
            <person name="Tallon L.J."/>
            <person name="Jenkins J."/>
            <person name="Rooney T."/>
            <person name="Rizzo M."/>
            <person name="Walts A."/>
            <person name="Utterback T."/>
            <person name="Fujii C.Y."/>
            <person name="Shea T.P."/>
            <person name="Creasy T.H."/>
            <person name="Haas B."/>
            <person name="Maiti R."/>
            <person name="Wu D."/>
            <person name="Peterson J."/>
            <person name="Van Aken S."/>
            <person name="Pai G."/>
            <person name="Militscher J."/>
            <person name="Sellers P."/>
            <person name="Gill J.E."/>
            <person name="Feldblyum T.V."/>
            <person name="Preuss D."/>
            <person name="Lin X."/>
            <person name="Nierman W.C."/>
            <person name="Salzberg S.L."/>
            <person name="White O."/>
            <person name="Venter J.C."/>
            <person name="Fraser C.M."/>
            <person name="Kaneko T."/>
            <person name="Nakamura Y."/>
            <person name="Sato S."/>
            <person name="Kato T."/>
            <person name="Asamizu E."/>
            <person name="Sasamoto S."/>
            <person name="Kimura T."/>
            <person name="Idesawa K."/>
            <person name="Kawashima K."/>
            <person name="Kishida Y."/>
            <person name="Kiyokawa C."/>
            <person name="Kohara M."/>
            <person name="Matsumoto M."/>
            <person name="Matsuno A."/>
            <person name="Muraki A."/>
            <person name="Nakayama S."/>
            <person name="Nakazaki N."/>
            <person name="Shinpo S."/>
            <person name="Takeuchi C."/>
            <person name="Wada T."/>
            <person name="Watanabe A."/>
            <person name="Yamada M."/>
            <person name="Yasuda M."/>
            <person name="Tabata S."/>
        </authorList>
    </citation>
    <scope>NUCLEOTIDE SEQUENCE [LARGE SCALE GENOMIC DNA]</scope>
    <source>
        <strain>cv. Columbia</strain>
    </source>
</reference>
<reference key="2">
    <citation type="journal article" date="2017" name="Plant J.">
        <title>Araport11: a complete reannotation of the Arabidopsis thaliana reference genome.</title>
        <authorList>
            <person name="Cheng C.Y."/>
            <person name="Krishnakumar V."/>
            <person name="Chan A.P."/>
            <person name="Thibaud-Nissen F."/>
            <person name="Schobel S."/>
            <person name="Town C.D."/>
        </authorList>
    </citation>
    <scope>GENOME REANNOTATION</scope>
    <source>
        <strain>cv. Columbia</strain>
    </source>
</reference>
<reference key="3">
    <citation type="journal article" date="2005" name="Plant Cell Physiol.">
        <title>Biochemical characterization of plasma membrane H+-ATPase activation in guard cell protoplasts of Arabidopsis thaliana in response to blue light.</title>
        <authorList>
            <person name="Ueno K."/>
            <person name="Kinoshita T."/>
            <person name="Inoue S."/>
            <person name="Emi T."/>
            <person name="Shimazaki K."/>
        </authorList>
    </citation>
    <scope>TISSUE SPECIFICITY</scope>
    <source>
        <strain>cv. Columbia GL1</strain>
    </source>
</reference>
<name>PMA7_ARATH</name>
<accession>Q9LY32</accession>
<protein>
    <recommendedName>
        <fullName>ATPase 7, plasma membrane-type</fullName>
        <ecNumber>7.1.2.1</ecNumber>
    </recommendedName>
    <alternativeName>
        <fullName>Proton pump 7</fullName>
    </alternativeName>
</protein>
<sequence length="961" mass="105520">MTDIEALKAITTESIDLENVPVEEVFQHLKCTKEGLTSNEVQERLTLFGYNKLEEKKESKILKFLGFMWNPLSWVMEAAALMAIGLAHGGGKPADYHDFVGIVVLLLINSTISFVEENNAGNAAAALMAQLAPKAKAVRDGKWNEIDAAELVPGDIVSIKLGDIIPADARLLEGDPLKIDQATLTGESLPVTKNPGASVYSGSTCKQGEIEAVVIATGVHTFFGKAAHLVDSTTHVGHFQKVLTAIGNFCICSIAVGMAIEIVVIYGLQKRGYRVGIDNLLVLLIGGIPIAMPTVLSVTMAIGAHRLAQQGAITKRMTAIEEMAGMDVLCSDKTGTLTLNKLSVDKNLIEVFKRGIDRDMAVLMAARAARLENQDAIDTAIVSMLSDPKEARAGIKELHFLPFSPANRRTALTYLDGEGKMHRVSKGAPEEILDMAHNKLEIKEKVHATIDKFAERGLRSLGLAYQEVPDGDVKGEGGPWDFVALLPLFDPPRHDSAQTIERALHLGVSVKMITGDQLAIAKETGRRLGMGTNMYPSSSLLSDNNTEGVSVDELIENADGFAGVFPEHKYEIVKRLQSRKHICGMTGDGVNDAPALKKADIGIAVDDATDAARGASDIVLTEPGLSVIISAVLTSRAIFQRMKNYTIYAVSITIRIVMGFMLLCVFWEFDFPPFMVLVIAILNDGTIMTISKDRVKPSPTPDCWKLKEIFATGVVLGAYLAIMTVVFFWAAYETNFFHNIFHVRNFNQHHFKMKDKKVAAHLNEQMASAVYLQVSTISQALIFVTRSRSWSFVERPGFLLVIAFLIAQLVASVISAMANWPFAGIRSIGWGWTGVIWIFNIVTYMLLDPIKFLVRYALSGKSWDRMVEGRTALTGKKNFGQEERMAAWATEKRTQHGLETGQKPVYERNSATELNNMAEEAKRRAEIARMRELQTLKGKVESAAKLKGYDLEDPNSNNYTI</sequence>
<gene>
    <name type="primary">AHA7</name>
    <name type="ordered locus">At3g60330</name>
    <name type="ORF">F27H5_120</name>
</gene>
<organism>
    <name type="scientific">Arabidopsis thaliana</name>
    <name type="common">Mouse-ear cress</name>
    <dbReference type="NCBI Taxonomy" id="3702"/>
    <lineage>
        <taxon>Eukaryota</taxon>
        <taxon>Viridiplantae</taxon>
        <taxon>Streptophyta</taxon>
        <taxon>Embryophyta</taxon>
        <taxon>Tracheophyta</taxon>
        <taxon>Spermatophyta</taxon>
        <taxon>Magnoliopsida</taxon>
        <taxon>eudicotyledons</taxon>
        <taxon>Gunneridae</taxon>
        <taxon>Pentapetalae</taxon>
        <taxon>rosids</taxon>
        <taxon>malvids</taxon>
        <taxon>Brassicales</taxon>
        <taxon>Brassicaceae</taxon>
        <taxon>Camelineae</taxon>
        <taxon>Arabidopsis</taxon>
    </lineage>
</organism>
<dbReference type="EC" id="7.1.2.1"/>
<dbReference type="EMBL" id="AL163852">
    <property type="protein sequence ID" value="CAB87870.1"/>
    <property type="molecule type" value="Genomic_DNA"/>
</dbReference>
<dbReference type="EMBL" id="CP002686">
    <property type="protein sequence ID" value="AEE80046.1"/>
    <property type="molecule type" value="Genomic_DNA"/>
</dbReference>
<dbReference type="EMBL" id="CP002686">
    <property type="protein sequence ID" value="AEE80047.1"/>
    <property type="molecule type" value="Genomic_DNA"/>
</dbReference>
<dbReference type="PIR" id="T49228">
    <property type="entry name" value="T49228"/>
</dbReference>
<dbReference type="RefSeq" id="NP_001190141.1">
    <property type="nucleotide sequence ID" value="NM_001203212.1"/>
</dbReference>
<dbReference type="RefSeq" id="NP_191592.5">
    <property type="nucleotide sequence ID" value="NM_115897.5"/>
</dbReference>
<dbReference type="SMR" id="Q9LY32"/>
<dbReference type="BioGRID" id="10518">
    <property type="interactions" value="7"/>
</dbReference>
<dbReference type="FunCoup" id="Q9LY32">
    <property type="interactions" value="315"/>
</dbReference>
<dbReference type="IntAct" id="Q9LY32">
    <property type="interactions" value="3"/>
</dbReference>
<dbReference type="STRING" id="3702.Q9LY32"/>
<dbReference type="TCDB" id="3.A.3.3.12">
    <property type="family name" value="the p-type atpase (p-atpase) superfamily"/>
</dbReference>
<dbReference type="GlyGen" id="Q9LY32">
    <property type="glycosylation" value="1 site"/>
</dbReference>
<dbReference type="iPTMnet" id="Q9LY32"/>
<dbReference type="PaxDb" id="3702-AT3G60330.2"/>
<dbReference type="ProteomicsDB" id="236648"/>
<dbReference type="EnsemblPlants" id="AT3G60330.1">
    <property type="protein sequence ID" value="AT3G60330.1"/>
    <property type="gene ID" value="AT3G60330"/>
</dbReference>
<dbReference type="EnsemblPlants" id="AT3G60330.2">
    <property type="protein sequence ID" value="AT3G60330.2"/>
    <property type="gene ID" value="AT3G60330"/>
</dbReference>
<dbReference type="GeneID" id="825204"/>
<dbReference type="Gramene" id="AT3G60330.1">
    <property type="protein sequence ID" value="AT3G60330.1"/>
    <property type="gene ID" value="AT3G60330"/>
</dbReference>
<dbReference type="Gramene" id="AT3G60330.2">
    <property type="protein sequence ID" value="AT3G60330.2"/>
    <property type="gene ID" value="AT3G60330"/>
</dbReference>
<dbReference type="KEGG" id="ath:AT3G60330"/>
<dbReference type="Araport" id="AT3G60330"/>
<dbReference type="TAIR" id="AT3G60330">
    <property type="gene designation" value="HA7"/>
</dbReference>
<dbReference type="eggNOG" id="KOG0205">
    <property type="taxonomic scope" value="Eukaryota"/>
</dbReference>
<dbReference type="HOGENOM" id="CLU_002360_6_4_1"/>
<dbReference type="InParanoid" id="Q9LY32"/>
<dbReference type="OMA" id="DHLKCTR"/>
<dbReference type="OrthoDB" id="116380at2759"/>
<dbReference type="PhylomeDB" id="Q9LY32"/>
<dbReference type="BioCyc" id="ARA:AT3G60330-MONOMER"/>
<dbReference type="PRO" id="PR:Q9LY32"/>
<dbReference type="Proteomes" id="UP000006548">
    <property type="component" value="Chromosome 3"/>
</dbReference>
<dbReference type="ExpressionAtlas" id="Q9LY32">
    <property type="expression patterns" value="baseline and differential"/>
</dbReference>
<dbReference type="GO" id="GO:0016020">
    <property type="term" value="C:membrane"/>
    <property type="evidence" value="ECO:0007669"/>
    <property type="project" value="UniProtKB-SubCell"/>
</dbReference>
<dbReference type="GO" id="GO:0005524">
    <property type="term" value="F:ATP binding"/>
    <property type="evidence" value="ECO:0007669"/>
    <property type="project" value="UniProtKB-KW"/>
</dbReference>
<dbReference type="GO" id="GO:0016887">
    <property type="term" value="F:ATP hydrolysis activity"/>
    <property type="evidence" value="ECO:0007669"/>
    <property type="project" value="InterPro"/>
</dbReference>
<dbReference type="GO" id="GO:0046872">
    <property type="term" value="F:metal ion binding"/>
    <property type="evidence" value="ECO:0007669"/>
    <property type="project" value="UniProtKB-KW"/>
</dbReference>
<dbReference type="GO" id="GO:0008553">
    <property type="term" value="F:P-type proton-exporting transporter activity"/>
    <property type="evidence" value="ECO:0007669"/>
    <property type="project" value="UniProtKB-EC"/>
</dbReference>
<dbReference type="GO" id="GO:0120029">
    <property type="term" value="P:proton export across plasma membrane"/>
    <property type="evidence" value="ECO:0007669"/>
    <property type="project" value="InterPro"/>
</dbReference>
<dbReference type="CDD" id="cd02076">
    <property type="entry name" value="P-type_ATPase_H"/>
    <property type="match status" value="1"/>
</dbReference>
<dbReference type="FunFam" id="1.20.1110.10:FF:000045">
    <property type="entry name" value="ATPase 4 plasma membrane-type"/>
    <property type="match status" value="1"/>
</dbReference>
<dbReference type="FunFam" id="2.70.150.10:FF:000004">
    <property type="entry name" value="Plasma membrane ATPase"/>
    <property type="match status" value="1"/>
</dbReference>
<dbReference type="FunFam" id="3.40.1110.10:FF:000004">
    <property type="entry name" value="Plasma membrane ATPase"/>
    <property type="match status" value="1"/>
</dbReference>
<dbReference type="FunFam" id="3.40.50.1000:FF:000211">
    <property type="entry name" value="Plasma membrane ATPase"/>
    <property type="match status" value="1"/>
</dbReference>
<dbReference type="Gene3D" id="6.10.140.890">
    <property type="match status" value="1"/>
</dbReference>
<dbReference type="Gene3D" id="3.40.1110.10">
    <property type="entry name" value="Calcium-transporting ATPase, cytoplasmic domain N"/>
    <property type="match status" value="1"/>
</dbReference>
<dbReference type="Gene3D" id="2.70.150.10">
    <property type="entry name" value="Calcium-transporting ATPase, cytoplasmic transduction domain A"/>
    <property type="match status" value="1"/>
</dbReference>
<dbReference type="Gene3D" id="1.20.1110.10">
    <property type="entry name" value="Calcium-transporting ATPase, transmembrane domain"/>
    <property type="match status" value="1"/>
</dbReference>
<dbReference type="Gene3D" id="3.40.50.1000">
    <property type="entry name" value="HAD superfamily/HAD-like"/>
    <property type="match status" value="1"/>
</dbReference>
<dbReference type="InterPro" id="IPR004014">
    <property type="entry name" value="ATPase_P-typ_cation-transptr_N"/>
</dbReference>
<dbReference type="InterPro" id="IPR023299">
    <property type="entry name" value="ATPase_P-typ_cyto_dom_N"/>
</dbReference>
<dbReference type="InterPro" id="IPR018303">
    <property type="entry name" value="ATPase_P-typ_P_site"/>
</dbReference>
<dbReference type="InterPro" id="IPR023298">
    <property type="entry name" value="ATPase_P-typ_TM_dom_sf"/>
</dbReference>
<dbReference type="InterPro" id="IPR008250">
    <property type="entry name" value="ATPase_P-typ_transduc_dom_A_sf"/>
</dbReference>
<dbReference type="InterPro" id="IPR036412">
    <property type="entry name" value="HAD-like_sf"/>
</dbReference>
<dbReference type="InterPro" id="IPR023214">
    <property type="entry name" value="HAD_sf"/>
</dbReference>
<dbReference type="InterPro" id="IPR006534">
    <property type="entry name" value="P-type_ATPase_IIIA"/>
</dbReference>
<dbReference type="InterPro" id="IPR001757">
    <property type="entry name" value="P_typ_ATPase"/>
</dbReference>
<dbReference type="InterPro" id="IPR044492">
    <property type="entry name" value="P_typ_ATPase_HD_dom"/>
</dbReference>
<dbReference type="NCBIfam" id="TIGR01647">
    <property type="entry name" value="ATPase-IIIA_H"/>
    <property type="match status" value="1"/>
</dbReference>
<dbReference type="NCBIfam" id="TIGR01494">
    <property type="entry name" value="ATPase_P-type"/>
    <property type="match status" value="2"/>
</dbReference>
<dbReference type="PANTHER" id="PTHR42861">
    <property type="entry name" value="CALCIUM-TRANSPORTING ATPASE"/>
    <property type="match status" value="1"/>
</dbReference>
<dbReference type="Pfam" id="PF00690">
    <property type="entry name" value="Cation_ATPase_N"/>
    <property type="match status" value="1"/>
</dbReference>
<dbReference type="Pfam" id="PF00122">
    <property type="entry name" value="E1-E2_ATPase"/>
    <property type="match status" value="1"/>
</dbReference>
<dbReference type="Pfam" id="PF00702">
    <property type="entry name" value="Hydrolase"/>
    <property type="match status" value="1"/>
</dbReference>
<dbReference type="PRINTS" id="PR00119">
    <property type="entry name" value="CATATPASE"/>
</dbReference>
<dbReference type="PRINTS" id="PR00120">
    <property type="entry name" value="HATPASE"/>
</dbReference>
<dbReference type="SFLD" id="SFLDG00002">
    <property type="entry name" value="C1.7:_P-type_atpase_like"/>
    <property type="match status" value="1"/>
</dbReference>
<dbReference type="SFLD" id="SFLDF00027">
    <property type="entry name" value="p-type_atpase"/>
    <property type="match status" value="1"/>
</dbReference>
<dbReference type="SMART" id="SM00831">
    <property type="entry name" value="Cation_ATPase_N"/>
    <property type="match status" value="1"/>
</dbReference>
<dbReference type="SUPFAM" id="SSF81653">
    <property type="entry name" value="Calcium ATPase, transduction domain A"/>
    <property type="match status" value="1"/>
</dbReference>
<dbReference type="SUPFAM" id="SSF81665">
    <property type="entry name" value="Calcium ATPase, transmembrane domain M"/>
    <property type="match status" value="1"/>
</dbReference>
<dbReference type="SUPFAM" id="SSF56784">
    <property type="entry name" value="HAD-like"/>
    <property type="match status" value="1"/>
</dbReference>
<dbReference type="PROSITE" id="PS00154">
    <property type="entry name" value="ATPASE_E1_E2"/>
    <property type="match status" value="1"/>
</dbReference>
<comment type="function">
    <text evidence="1">The plasma membrane H(+) ATPase of plants and fungi generates a proton gradient that drives the active transport of nutrients by H(+)-symport. The resulting external acidification and/or internal alkinization may mediate growth responses (By similarity).</text>
</comment>
<comment type="catalytic activity">
    <reaction>
        <text>ATP + H2O + H(+)(in) = ADP + phosphate + 2 H(+)(out)</text>
        <dbReference type="Rhea" id="RHEA:20852"/>
        <dbReference type="ChEBI" id="CHEBI:15377"/>
        <dbReference type="ChEBI" id="CHEBI:15378"/>
        <dbReference type="ChEBI" id="CHEBI:30616"/>
        <dbReference type="ChEBI" id="CHEBI:43474"/>
        <dbReference type="ChEBI" id="CHEBI:456216"/>
        <dbReference type="EC" id="7.1.2.1"/>
    </reaction>
</comment>
<comment type="subunit">
    <text evidence="1">Binds to 14-3-3 proteins. The binding is induced by phosphorylation of Thr-960. Binding to 14-3-3 proteins activates the H(+)-ATPase (By similarity).</text>
</comment>
<comment type="subcellular location">
    <subcellularLocation>
        <location>Membrane</location>
        <topology>Multi-pass membrane protein</topology>
    </subcellularLocation>
</comment>
<comment type="tissue specificity">
    <text evidence="5">Expressed in guard cells, roots and leaves, and barely in mesophyll cells.</text>
</comment>
<comment type="similarity">
    <text evidence="6">Belongs to the cation transport ATPase (P-type) (TC 3.A.3) family. Type IIIA subfamily.</text>
</comment>
<proteinExistence type="evidence at transcript level"/>
<evidence type="ECO:0000250" key="1"/>
<evidence type="ECO:0000250" key="2">
    <source>
        <dbReference type="UniProtKB" id="P19456"/>
    </source>
</evidence>
<evidence type="ECO:0000250" key="3">
    <source>
        <dbReference type="UniProtKB" id="P20649"/>
    </source>
</evidence>
<evidence type="ECO:0000255" key="4"/>
<evidence type="ECO:0000269" key="5">
    <source>
    </source>
</evidence>
<evidence type="ECO:0000305" key="6"/>